<protein>
    <recommendedName>
        <fullName evidence="5">Spheroidene monooxygenase</fullName>
        <ecNumber evidence="2">1.14.15.9</ecNumber>
    </recommendedName>
    <alternativeName>
        <fullName evidence="3">Acyclic carotenoid 2-ketolase</fullName>
    </alternativeName>
</protein>
<dbReference type="EC" id="1.14.15.9" evidence="2"/>
<dbReference type="EMBL" id="X52291">
    <property type="protein sequence ID" value="CAA36532.1"/>
    <property type="molecule type" value="Genomic_DNA"/>
</dbReference>
<dbReference type="EMBL" id="Z11165">
    <property type="protein sequence ID" value="CAA77539.1"/>
    <property type="molecule type" value="Genomic_DNA"/>
</dbReference>
<dbReference type="EMBL" id="CP001312">
    <property type="protein sequence ID" value="ADE84443.1"/>
    <property type="molecule type" value="Genomic_DNA"/>
</dbReference>
<dbReference type="PIR" id="S04401">
    <property type="entry name" value="S04401"/>
</dbReference>
<dbReference type="RefSeq" id="WP_013066422.1">
    <property type="nucleotide sequence ID" value="NC_014034.1"/>
</dbReference>
<dbReference type="STRING" id="272942.RCAP_rcc00678"/>
<dbReference type="GeneID" id="31489624"/>
<dbReference type="KEGG" id="rcp:RCAP_rcc00678"/>
<dbReference type="eggNOG" id="ENOG5030G1W">
    <property type="taxonomic scope" value="Bacteria"/>
</dbReference>
<dbReference type="HOGENOM" id="CLU_064051_0_0_5"/>
<dbReference type="OrthoDB" id="1122317at2"/>
<dbReference type="BioCyc" id="MetaCyc:MONOMER-14936"/>
<dbReference type="UniPathway" id="UPA00683"/>
<dbReference type="Proteomes" id="UP000002361">
    <property type="component" value="Chromosome"/>
</dbReference>
<dbReference type="GO" id="GO:0046872">
    <property type="term" value="F:metal ion binding"/>
    <property type="evidence" value="ECO:0007669"/>
    <property type="project" value="UniProtKB-KW"/>
</dbReference>
<dbReference type="GO" id="GO:0043823">
    <property type="term" value="F:spheroidene monooxygenase activity"/>
    <property type="evidence" value="ECO:0007669"/>
    <property type="project" value="UniProtKB-EC"/>
</dbReference>
<dbReference type="GO" id="GO:0016117">
    <property type="term" value="P:carotenoid biosynthetic process"/>
    <property type="evidence" value="ECO:0007669"/>
    <property type="project" value="UniProtKB-KW"/>
</dbReference>
<dbReference type="CDD" id="cd21650">
    <property type="entry name" value="CrtA-like"/>
    <property type="match status" value="1"/>
</dbReference>
<dbReference type="InterPro" id="IPR049574">
    <property type="entry name" value="CrtA-like"/>
</dbReference>
<dbReference type="NCBIfam" id="NF045923">
    <property type="entry name" value="SpheroidMoxCrtARhod"/>
    <property type="match status" value="1"/>
</dbReference>
<gene>
    <name evidence="4" type="primary">crtA</name>
    <name type="ordered locus">RCAP_rcc00678</name>
</gene>
<organism>
    <name type="scientific">Rhodobacter capsulatus (strain ATCC BAA-309 / NBRC 16581 / SB1003)</name>
    <dbReference type="NCBI Taxonomy" id="272942"/>
    <lineage>
        <taxon>Bacteria</taxon>
        <taxon>Pseudomonadati</taxon>
        <taxon>Pseudomonadota</taxon>
        <taxon>Alphaproteobacteria</taxon>
        <taxon>Rhodobacterales</taxon>
        <taxon>Rhodobacter group</taxon>
        <taxon>Rhodobacter</taxon>
    </lineage>
</organism>
<accession>P17055</accession>
<accession>D5AP71</accession>
<proteinExistence type="evidence at protein level"/>
<sequence length="241" mass="27004">MPVASLSLFRFDGTSSLPWVISQMILSRRPLNDEPRVKFYKLCGSGTGEGFTPKPNWRVWAIMAAFDTEADARDVTANHPVWKRWRAHAAETLVLHLQPLSARGTWGGVNPFLPEQVAEPSPDEPVVALTRAAIKPHKANAFWSRVPKISEKVGEDQNLMFKIGIGEIPLFHQVTFSIWPDVAKMNAFARGDTPHGKAIRAAREEGWFTEELYARFRLLGTEGSWMGKDPLASKVLERETA</sequence>
<comment type="function">
    <text evidence="2">Involved in the biosynthesis of the carotenoid spheroidene (PubMed:19136077). Catalyzes the introduction of one keto group at the C-2 position of spheroidene (PubMed:19136077). In vitro, can also catalyze the introduction of two keto groups at the C-2 and C-2' positions of spirilloxanthin, but spirilloxanthin biosynthesis pathway is not present in R.capsulatus (PubMed:19136077).</text>
</comment>
<comment type="catalytic activity">
    <reaction evidence="2">
        <text>spheroidene + 4 reduced [2Fe-2S]-[ferredoxin] + 2 O2 + 4 H(+) = spheroiden-2-one + 4 oxidized [2Fe-2S]-[ferredoxin] + 3 H2O</text>
        <dbReference type="Rhea" id="RHEA:33027"/>
        <dbReference type="Rhea" id="RHEA-COMP:10000"/>
        <dbReference type="Rhea" id="RHEA-COMP:10001"/>
        <dbReference type="ChEBI" id="CHEBI:15377"/>
        <dbReference type="ChEBI" id="CHEBI:15378"/>
        <dbReference type="ChEBI" id="CHEBI:15379"/>
        <dbReference type="ChEBI" id="CHEBI:33737"/>
        <dbReference type="ChEBI" id="CHEBI:33738"/>
        <dbReference type="ChEBI" id="CHEBI:35330"/>
        <dbReference type="ChEBI" id="CHEBI:62480"/>
        <dbReference type="EC" id="1.14.15.9"/>
    </reaction>
    <physiologicalReaction direction="left-to-right" evidence="6">
        <dbReference type="Rhea" id="RHEA:33028"/>
    </physiologicalReaction>
</comment>
<comment type="catalytic activity">
    <reaction evidence="2">
        <text>spirilloxanthin + 4 reduced [2Fe-2S]-[ferredoxin] + 2 O2 + 4 H(+) = 2-oxospirilloxanthin + 4 oxidized [2Fe-2S]-[ferredoxin] + 3 H2O</text>
        <dbReference type="Rhea" id="RHEA:33039"/>
        <dbReference type="Rhea" id="RHEA-COMP:10000"/>
        <dbReference type="Rhea" id="RHEA-COMP:10001"/>
        <dbReference type="ChEBI" id="CHEBI:15377"/>
        <dbReference type="ChEBI" id="CHEBI:15378"/>
        <dbReference type="ChEBI" id="CHEBI:15379"/>
        <dbReference type="ChEBI" id="CHEBI:33737"/>
        <dbReference type="ChEBI" id="CHEBI:33738"/>
        <dbReference type="ChEBI" id="CHEBI:35328"/>
        <dbReference type="ChEBI" id="CHEBI:64792"/>
        <dbReference type="EC" id="1.14.15.9"/>
    </reaction>
</comment>
<comment type="catalytic activity">
    <reaction evidence="2">
        <text>2-oxospirilloxanthin + 4 reduced [2Fe-2S]-[ferredoxin] + 2 O2 + 4 H(+) = 2,2'-dioxospirilloxanthin + 4 oxidized [2Fe-2S]-[ferredoxin] + 3 H2O</text>
        <dbReference type="Rhea" id="RHEA:33035"/>
        <dbReference type="Rhea" id="RHEA-COMP:10000"/>
        <dbReference type="Rhea" id="RHEA-COMP:10001"/>
        <dbReference type="ChEBI" id="CHEBI:15377"/>
        <dbReference type="ChEBI" id="CHEBI:15378"/>
        <dbReference type="ChEBI" id="CHEBI:15379"/>
        <dbReference type="ChEBI" id="CHEBI:33737"/>
        <dbReference type="ChEBI" id="CHEBI:33738"/>
        <dbReference type="ChEBI" id="CHEBI:64792"/>
        <dbReference type="ChEBI" id="CHEBI:64793"/>
        <dbReference type="EC" id="1.14.15.9"/>
    </reaction>
</comment>
<comment type="catalytic activity">
    <reaction evidence="6">
        <text>spheroidene + 2 reduced [2Fe-2S]-[ferredoxin] + O2 + 2 H(+) = 2-hydroxyspheroidene + 2 oxidized [2Fe-2S]-[ferredoxin] + H2O</text>
        <dbReference type="Rhea" id="RHEA:49328"/>
        <dbReference type="Rhea" id="RHEA-COMP:10000"/>
        <dbReference type="Rhea" id="RHEA-COMP:10001"/>
        <dbReference type="ChEBI" id="CHEBI:15377"/>
        <dbReference type="ChEBI" id="CHEBI:15378"/>
        <dbReference type="ChEBI" id="CHEBI:15379"/>
        <dbReference type="ChEBI" id="CHEBI:33737"/>
        <dbReference type="ChEBI" id="CHEBI:33738"/>
        <dbReference type="ChEBI" id="CHEBI:35330"/>
        <dbReference type="ChEBI" id="CHEBI:91221"/>
    </reaction>
    <physiologicalReaction direction="left-to-right" evidence="6">
        <dbReference type="Rhea" id="RHEA:49329"/>
    </physiologicalReaction>
</comment>
<comment type="catalytic activity">
    <reaction evidence="6">
        <text>2-hydroxyspheroidene + 2 reduced [2Fe-2S]-[ferredoxin] + O2 + 2 H(+) = 2,2-dihydroxyspheroidene + 2 oxidized [2Fe-2S]-[ferredoxin] + H2O</text>
        <dbReference type="Rhea" id="RHEA:49332"/>
        <dbReference type="Rhea" id="RHEA-COMP:10000"/>
        <dbReference type="Rhea" id="RHEA-COMP:10001"/>
        <dbReference type="ChEBI" id="CHEBI:15377"/>
        <dbReference type="ChEBI" id="CHEBI:15378"/>
        <dbReference type="ChEBI" id="CHEBI:15379"/>
        <dbReference type="ChEBI" id="CHEBI:33737"/>
        <dbReference type="ChEBI" id="CHEBI:33738"/>
        <dbReference type="ChEBI" id="CHEBI:91221"/>
        <dbReference type="ChEBI" id="CHEBI:91223"/>
    </reaction>
    <physiologicalReaction direction="left-to-right" evidence="6">
        <dbReference type="Rhea" id="RHEA:49333"/>
    </physiologicalReaction>
</comment>
<comment type="catalytic activity">
    <reaction evidence="6">
        <text>2,2-dihydroxyspheroidene = spheroiden-2-one + H2O</text>
        <dbReference type="Rhea" id="RHEA:49336"/>
        <dbReference type="ChEBI" id="CHEBI:15377"/>
        <dbReference type="ChEBI" id="CHEBI:62480"/>
        <dbReference type="ChEBI" id="CHEBI:91223"/>
    </reaction>
    <physiologicalReaction direction="left-to-right" evidence="6">
        <dbReference type="Rhea" id="RHEA:49337"/>
    </physiologicalReaction>
</comment>
<comment type="catalytic activity">
    <reaction evidence="6">
        <text>spirilloxanthin + 2 reduced [2Fe-2S]-[ferredoxin] + O2 + 2 H(+) = 2-hydroxyspirilloxanthin + 2 oxidized [2Fe-2S]-[ferredoxin] + H2O</text>
        <dbReference type="Rhea" id="RHEA:49340"/>
        <dbReference type="Rhea" id="RHEA-COMP:10000"/>
        <dbReference type="Rhea" id="RHEA-COMP:10001"/>
        <dbReference type="ChEBI" id="CHEBI:15377"/>
        <dbReference type="ChEBI" id="CHEBI:15378"/>
        <dbReference type="ChEBI" id="CHEBI:15379"/>
        <dbReference type="ChEBI" id="CHEBI:33737"/>
        <dbReference type="ChEBI" id="CHEBI:33738"/>
        <dbReference type="ChEBI" id="CHEBI:35328"/>
        <dbReference type="ChEBI" id="CHEBI:91227"/>
    </reaction>
</comment>
<comment type="catalytic activity">
    <reaction evidence="6">
        <text>2-hydroxyspirilloxanthin + 2 reduced [2Fe-2S]-[ferredoxin] + O2 + 2 H(+) = 2,2-dihydroxyspirilloxanthin + 2 oxidized [2Fe-2S]-[ferredoxin] + H2O</text>
        <dbReference type="Rhea" id="RHEA:49344"/>
        <dbReference type="Rhea" id="RHEA-COMP:10000"/>
        <dbReference type="Rhea" id="RHEA-COMP:10001"/>
        <dbReference type="ChEBI" id="CHEBI:15377"/>
        <dbReference type="ChEBI" id="CHEBI:15378"/>
        <dbReference type="ChEBI" id="CHEBI:15379"/>
        <dbReference type="ChEBI" id="CHEBI:33737"/>
        <dbReference type="ChEBI" id="CHEBI:33738"/>
        <dbReference type="ChEBI" id="CHEBI:91227"/>
        <dbReference type="ChEBI" id="CHEBI:91228"/>
    </reaction>
</comment>
<comment type="catalytic activity">
    <reaction evidence="6">
        <text>2,2-dihydroxyspirilloxanthin = 2-oxospirilloxanthin + H2O</text>
        <dbReference type="Rhea" id="RHEA:49348"/>
        <dbReference type="ChEBI" id="CHEBI:15377"/>
        <dbReference type="ChEBI" id="CHEBI:64792"/>
        <dbReference type="ChEBI" id="CHEBI:91228"/>
    </reaction>
</comment>
<comment type="catalytic activity">
    <reaction evidence="6">
        <text>2-oxospirilloxanthin + 2 reduced [2Fe-2S]-[ferredoxin] + O2 + 2 H(+) = 2'-hydroxy-2-oxospirilloxanthin + 2 oxidized [2Fe-2S]-[ferredoxin] + H2O</text>
        <dbReference type="Rhea" id="RHEA:49352"/>
        <dbReference type="Rhea" id="RHEA-COMP:10000"/>
        <dbReference type="Rhea" id="RHEA-COMP:10001"/>
        <dbReference type="ChEBI" id="CHEBI:15377"/>
        <dbReference type="ChEBI" id="CHEBI:15378"/>
        <dbReference type="ChEBI" id="CHEBI:15379"/>
        <dbReference type="ChEBI" id="CHEBI:33737"/>
        <dbReference type="ChEBI" id="CHEBI:33738"/>
        <dbReference type="ChEBI" id="CHEBI:64792"/>
        <dbReference type="ChEBI" id="CHEBI:91229"/>
    </reaction>
</comment>
<comment type="catalytic activity">
    <reaction evidence="6">
        <text>2'-hydroxy-2-oxospirilloxanthin + 2 reduced [2Fe-2S]-[ferredoxin] + O2 + 2 H(+) = 2',2'-dihydroxy-2-oxospirilloxanthin + 2 oxidized [2Fe-2S]-[ferredoxin] + H2O</text>
        <dbReference type="Rhea" id="RHEA:49356"/>
        <dbReference type="Rhea" id="RHEA-COMP:10000"/>
        <dbReference type="Rhea" id="RHEA-COMP:10001"/>
        <dbReference type="ChEBI" id="CHEBI:15377"/>
        <dbReference type="ChEBI" id="CHEBI:15378"/>
        <dbReference type="ChEBI" id="CHEBI:15379"/>
        <dbReference type="ChEBI" id="CHEBI:33737"/>
        <dbReference type="ChEBI" id="CHEBI:33738"/>
        <dbReference type="ChEBI" id="CHEBI:91229"/>
        <dbReference type="ChEBI" id="CHEBI:91230"/>
    </reaction>
</comment>
<comment type="catalytic activity">
    <reaction evidence="6">
        <text>2',2'-dihydroxy-2-oxospirilloxanthin = 2,2'-dioxospirilloxanthin + H2O</text>
        <dbReference type="Rhea" id="RHEA:49360"/>
        <dbReference type="ChEBI" id="CHEBI:15377"/>
        <dbReference type="ChEBI" id="CHEBI:64793"/>
        <dbReference type="ChEBI" id="CHEBI:91230"/>
    </reaction>
</comment>
<comment type="cofactor">
    <cofactor evidence="1">
        <name>heme</name>
        <dbReference type="ChEBI" id="CHEBI:30413"/>
    </cofactor>
    <text evidence="1">Binds 1 heme per subunit.</text>
</comment>
<comment type="biophysicochemical properties">
    <kinetics>
        <KM evidence="2">19.1 uM for spheroidene</KM>
        <KM evidence="2">10.1 uM for HO-spheroidene</KM>
        <KM evidence="2">16.9 uM for spirilloxanthin (formation of 2-oxospirilloxanthin)</KM>
        <KM evidence="2">13.6 uM for spirilloxanthin (formation of 2,2'-dioxospririlloxanthin)</KM>
        <Vmax evidence="2">1.31 umol/h/mg enzyme with spheroidene as substrate</Vmax>
        <Vmax evidence="2">1.212 umol/h/mg enzyme with HO-spheroidene as substrate</Vmax>
        <Vmax evidence="2">1.002 umol/h/mg enzyme with spirilloxanthin as substrate (formation of 2-oxospririlloxanthin)</Vmax>
        <Vmax evidence="2">0.357 umol/h/mg enzyme with spirilloxanthin as substrate (formation of 2,2'-dioxospririlloxanthin)</Vmax>
    </kinetics>
</comment>
<comment type="pathway">
    <text evidence="6">Carotenoid biosynthesis; spheroidene biosynthesis.</text>
</comment>
<comment type="similarity">
    <text evidence="5">Belongs to the CrtA family.</text>
</comment>
<keyword id="KW-0125">Carotenoid biosynthesis</keyword>
<keyword id="KW-0349">Heme</keyword>
<keyword id="KW-0408">Iron</keyword>
<keyword id="KW-0479">Metal-binding</keyword>
<keyword id="KW-0503">Monooxygenase</keyword>
<keyword id="KW-0560">Oxidoreductase</keyword>
<keyword id="KW-1185">Reference proteome</keyword>
<name>CRTA_RHOCB</name>
<evidence type="ECO:0000250" key="1">
    <source>
        <dbReference type="UniProtKB" id="Q3J189"/>
    </source>
</evidence>
<evidence type="ECO:0000269" key="2">
    <source>
    </source>
</evidence>
<evidence type="ECO:0000303" key="3">
    <source>
    </source>
</evidence>
<evidence type="ECO:0000303" key="4">
    <source>
    </source>
</evidence>
<evidence type="ECO:0000305" key="5"/>
<evidence type="ECO:0000305" key="6">
    <source>
    </source>
</evidence>
<reference key="1">
    <citation type="journal article" date="1989" name="Mol. Gen. Genet.">
        <title>Nucleotide sequence, organization, and nature of the protein products of the carotenoid biosynthesis gene cluster of Rhodobacter capsulatus.</title>
        <authorList>
            <person name="Armstrong G.A."/>
            <person name="Alberti M."/>
            <person name="Leach F."/>
            <person name="Hearst J.E."/>
        </authorList>
    </citation>
    <scope>PRELIMINARY NUCLEOTIDE SEQUENCE [GENOMIC DNA]</scope>
    <source>
        <strain>ATCC BAA-309 / NBRC 16581 / SB1003</strain>
    </source>
</reference>
<reference key="2">
    <citation type="submission" date="1991-11" db="EMBL/GenBank/DDBJ databases">
        <authorList>
            <person name="Burke D.H."/>
            <person name="Alberti M."/>
            <person name="Armstrong G.A."/>
            <person name="Hearst J.E."/>
        </authorList>
    </citation>
    <scope>NUCLEOTIDE SEQUENCE [GENOMIC DNA]</scope>
    <source>
        <strain>ATCC BAA-309 / NBRC 16581 / SB1003</strain>
    </source>
</reference>
<reference key="3">
    <citation type="journal article" date="2010" name="J. Bacteriol.">
        <title>Complete genome sequence of the photosynthetic purple nonsulfur bacterium Rhodobacter capsulatus SB 1003.</title>
        <authorList>
            <person name="Strnad H."/>
            <person name="Lapidus A."/>
            <person name="Paces J."/>
            <person name="Ulbrich P."/>
            <person name="Vlcek C."/>
            <person name="Paces V."/>
            <person name="Haselkorn R."/>
        </authorList>
    </citation>
    <scope>NUCLEOTIDE SEQUENCE [LARGE SCALE GENOMIC DNA]</scope>
    <source>
        <strain>ATCC BAA-309 / NBRC 16581 / SB1003</strain>
    </source>
</reference>
<reference key="4">
    <citation type="journal article" date="2009" name="Biochim. Biophys. Acta">
        <title>Catalytic properties of the expressed acyclic carotenoid 2-ketolases from Rhodobacter capsulatus and Rubrivivax gelatinosus.</title>
        <authorList>
            <person name="Gerjets T."/>
            <person name="Steiger S."/>
            <person name="Sandmann G."/>
        </authorList>
    </citation>
    <scope>FUNCTION</scope>
    <scope>CATALYTIC ACTIVITY</scope>
    <scope>BIOPHYSICOCHEMICAL PROPERTIES</scope>
    <source>
        <strain>ATCC BAA-309 / NBRC 16581 / SB1003</strain>
    </source>
</reference>
<feature type="chain" id="PRO_0000079363" description="Spheroidene monooxygenase">
    <location>
        <begin position="1"/>
        <end position="241"/>
    </location>
</feature>